<accession>Q66145</accession>
<comment type="function">
    <text evidence="4">RNA-dependent RNA polymerase which replicates the viral genome composed of 3 RNA segments, RNA1, RNA2 and RNA3.</text>
</comment>
<comment type="catalytic activity">
    <reaction evidence="2">
        <text>RNA(n) + a ribonucleoside 5'-triphosphate = RNA(n+1) + diphosphate</text>
        <dbReference type="Rhea" id="RHEA:21248"/>
        <dbReference type="Rhea" id="RHEA-COMP:14527"/>
        <dbReference type="Rhea" id="RHEA-COMP:17342"/>
        <dbReference type="ChEBI" id="CHEBI:33019"/>
        <dbReference type="ChEBI" id="CHEBI:61557"/>
        <dbReference type="ChEBI" id="CHEBI:140395"/>
        <dbReference type="EC" id="2.7.7.48"/>
    </reaction>
</comment>
<comment type="subunit">
    <text evidence="1">Interacts with replication protein 1a.</text>
</comment>
<comment type="similarity">
    <text evidence="4">Belongs to the ssRNA positive-strand viruses RNA-directed RNA polymerase family.</text>
</comment>
<dbReference type="EC" id="2.7.7.48"/>
<dbReference type="EMBL" id="D86613">
    <property type="protein sequence ID" value="BAA13141.1"/>
    <property type="molecule type" value="Genomic_RNA"/>
</dbReference>
<dbReference type="GO" id="GO:0000166">
    <property type="term" value="F:nucleotide binding"/>
    <property type="evidence" value="ECO:0007669"/>
    <property type="project" value="UniProtKB-KW"/>
</dbReference>
<dbReference type="GO" id="GO:0003723">
    <property type="term" value="F:RNA binding"/>
    <property type="evidence" value="ECO:0007669"/>
    <property type="project" value="InterPro"/>
</dbReference>
<dbReference type="GO" id="GO:0003968">
    <property type="term" value="F:RNA-directed RNA polymerase activity"/>
    <property type="evidence" value="ECO:0007669"/>
    <property type="project" value="UniProtKB-KW"/>
</dbReference>
<dbReference type="GO" id="GO:0006351">
    <property type="term" value="P:DNA-templated transcription"/>
    <property type="evidence" value="ECO:0007669"/>
    <property type="project" value="InterPro"/>
</dbReference>
<dbReference type="GO" id="GO:0039690">
    <property type="term" value="P:positive stranded viral RNA replication"/>
    <property type="evidence" value="ECO:0007669"/>
    <property type="project" value="InterPro"/>
</dbReference>
<dbReference type="CDD" id="cd23252">
    <property type="entry name" value="Bromoviridae_RdRp"/>
    <property type="match status" value="1"/>
</dbReference>
<dbReference type="InterPro" id="IPR047309">
    <property type="entry name" value="Bromoviridae_RdRp"/>
</dbReference>
<dbReference type="InterPro" id="IPR043502">
    <property type="entry name" value="DNA/RNA_pol_sf"/>
</dbReference>
<dbReference type="InterPro" id="IPR001788">
    <property type="entry name" value="RNA-dep_RNA_pol_alsuvir"/>
</dbReference>
<dbReference type="InterPro" id="IPR007094">
    <property type="entry name" value="RNA-dir_pol_PSvirus"/>
</dbReference>
<dbReference type="Pfam" id="PF00978">
    <property type="entry name" value="RdRP_2"/>
    <property type="match status" value="1"/>
</dbReference>
<dbReference type="SUPFAM" id="SSF56672">
    <property type="entry name" value="DNA/RNA polymerases"/>
    <property type="match status" value="1"/>
</dbReference>
<dbReference type="PROSITE" id="PS50507">
    <property type="entry name" value="RDRP_SSRNA_POS"/>
    <property type="match status" value="1"/>
</dbReference>
<reference key="1">
    <citation type="submission" date="1996-07" db="EMBL/GenBank/DDBJ databases">
        <authorList>
            <person name="Karasawa A."/>
            <person name="Ito A."/>
            <person name="Okada I."/>
            <person name="Hase S."/>
            <person name="Ehara Y."/>
        </authorList>
    </citation>
    <scope>NUCLEOTIDE SEQUENCE [GENOMIC RNA]</scope>
</reference>
<name>RDRP_CMVMB</name>
<proteinExistence type="inferred from homology"/>
<evidence type="ECO:0000250" key="1"/>
<evidence type="ECO:0000255" key="2">
    <source>
        <dbReference type="PROSITE-ProRule" id="PRU00539"/>
    </source>
</evidence>
<evidence type="ECO:0000256" key="3">
    <source>
        <dbReference type="SAM" id="MobiDB-lite"/>
    </source>
</evidence>
<evidence type="ECO:0000305" key="4"/>
<protein>
    <recommendedName>
        <fullName>RNA-directed RNA polymerase 2a</fullName>
        <shortName>protein 2a</shortName>
        <ecNumber>2.7.7.48</ecNumber>
    </recommendedName>
</protein>
<sequence length="857" mass="96671">MAFPAPAFSLANLLNGSYGVDTPEDVERLRSEQREEAAAACRNYRPLSAVDVSESVTEDAHSLQTPDGAPAEAVSDEFVTYGAEDYLEKSDDELLVAFETMVKPMRIGQLWCPAFNKCSFISSIAMARALLLAPRTSHRTMKCFEDLVAAIYTKSDFYYSEECEADDVQMDISSRDVPGYSFEPWSRTSGFEPPPICEACDMIMYQCPCFDFNALKKSCAERTFADDYVIEGLDGVVDNATLLSNLGPFLVPVKCQYEKCPTPPIAIPPNLNRATDRVDINLVQSICDSTLPTHSNYDDSFHQVFVESADYSIDLDHVRLRQSDLIAKIPDSGHMIPVLNTGSGHKRVGTTKEVLTAIKKRNADVPELGDSVNLSRLSKAVAERFFISYINGNSLASSNFVNVVSNFHDYMEKWKSSGLSYDDLPDLHAENLQFYDHMIKSDVKPVVSDTLNIDRPIPATITYHKKSITSQFSPLFTALFERFQRCLRERIILPVGKISSLEMAGFDVKNKYCLEIDLSKFDKSQGEFHLLIQEHILNGLGCPAPITKWWCDFHRFSYIRDRRAGVGMPISFQRRTGDAFTYFGNTIVTMAEFAWCYDTDQFEKLLFSGDDSLGFSLLPPVGDSSKFTTLYNMEAKVMEPSVPYICSKFLLSDEFGNTFSVPDPLREVQRLGTKKIPYSDNDEFLFAHFMSFVDRLKFLDRMSQSCIDQLSIFFELKYKKSGEEAALMLGAFKKYTANFQSYKELYYSDRHQCELINSFCSTEFRVERVNSNKQRKKYGIERRCDDKRRTPTGSYGGGEEAETKVSQTKSTGTRSQKSQRESAFESQTVPLPTVLSSGWSGTDRVVPPCERGGVTRA</sequence>
<organism>
    <name type="scientific">Cucumber mosaic virus (strain MB-8)</name>
    <name type="common">CMV</name>
    <dbReference type="NCBI Taxonomy" id="117122"/>
    <lineage>
        <taxon>Viruses</taxon>
        <taxon>Riboviria</taxon>
        <taxon>Orthornavirae</taxon>
        <taxon>Kitrinoviricota</taxon>
        <taxon>Alsuviricetes</taxon>
        <taxon>Martellivirales</taxon>
        <taxon>Bromoviridae</taxon>
        <taxon>Cucumovirus</taxon>
        <taxon>Cucumber mosaic virus</taxon>
    </lineage>
</organism>
<feature type="chain" id="PRO_0000083278" description="RNA-directed RNA polymerase 2a">
    <location>
        <begin position="1"/>
        <end position="857"/>
    </location>
</feature>
<feature type="domain" description="RdRp catalytic" evidence="2">
    <location>
        <begin position="511"/>
        <end position="624"/>
    </location>
</feature>
<feature type="region of interest" description="Disordered" evidence="3">
    <location>
        <begin position="780"/>
        <end position="857"/>
    </location>
</feature>
<feature type="compositionally biased region" description="Basic and acidic residues" evidence="3">
    <location>
        <begin position="780"/>
        <end position="789"/>
    </location>
</feature>
<feature type="compositionally biased region" description="Polar residues" evidence="3">
    <location>
        <begin position="804"/>
        <end position="816"/>
    </location>
</feature>
<feature type="compositionally biased region" description="Polar residues" evidence="3">
    <location>
        <begin position="824"/>
        <end position="840"/>
    </location>
</feature>
<organismHost>
    <name type="scientific">Cucumis sativus</name>
    <name type="common">Cucumber</name>
    <dbReference type="NCBI Taxonomy" id="3659"/>
</organismHost>
<organismHost>
    <name type="scientific">Solanum lycopersicum</name>
    <name type="common">Tomato</name>
    <name type="synonym">Lycopersicon esculentum</name>
    <dbReference type="NCBI Taxonomy" id="4081"/>
</organismHost>
<organismHost>
    <name type="scientific">Spinacia oleracea</name>
    <name type="common">Spinach</name>
    <dbReference type="NCBI Taxonomy" id="3562"/>
</organismHost>
<gene>
    <name type="ORF">ORF2a</name>
</gene>
<keyword id="KW-0547">Nucleotide-binding</keyword>
<keyword id="KW-0548">Nucleotidyltransferase</keyword>
<keyword id="KW-0696">RNA-directed RNA polymerase</keyword>
<keyword id="KW-0808">Transferase</keyword>
<keyword id="KW-0693">Viral RNA replication</keyword>